<gene>
    <name evidence="1" type="primary">argR</name>
    <name type="ordered locus">CA_C2074</name>
</gene>
<evidence type="ECO:0000255" key="1">
    <source>
        <dbReference type="HAMAP-Rule" id="MF_00173"/>
    </source>
</evidence>
<name>ARGR_CLOAB</name>
<keyword id="KW-0028">Amino-acid biosynthesis</keyword>
<keyword id="KW-0055">Arginine biosynthesis</keyword>
<keyword id="KW-0963">Cytoplasm</keyword>
<keyword id="KW-0238">DNA-binding</keyword>
<keyword id="KW-1185">Reference proteome</keyword>
<keyword id="KW-0678">Repressor</keyword>
<keyword id="KW-0804">Transcription</keyword>
<keyword id="KW-0805">Transcription regulation</keyword>
<accession>Q97HD8</accession>
<sequence>MKVSRHTKILEIINLKDIETQEELAEELRRSGMEVTQATVSRDIKELKLIKVLSSKGRYKYATISPTESFLSNKLVTIFAQTVLNVDRVNNMVVVKTISGSANAAAEAIDSLNLDGIAGSIAGDNTIFILSRSEETAFNIVQKLKKMINE</sequence>
<protein>
    <recommendedName>
        <fullName evidence="1">Arginine repressor</fullName>
    </recommendedName>
</protein>
<organism>
    <name type="scientific">Clostridium acetobutylicum (strain ATCC 824 / DSM 792 / JCM 1419 / IAM 19013 / LMG 5710 / NBRC 13948 / NRRL B-527 / VKM B-1787 / 2291 / W)</name>
    <dbReference type="NCBI Taxonomy" id="272562"/>
    <lineage>
        <taxon>Bacteria</taxon>
        <taxon>Bacillati</taxon>
        <taxon>Bacillota</taxon>
        <taxon>Clostridia</taxon>
        <taxon>Eubacteriales</taxon>
        <taxon>Clostridiaceae</taxon>
        <taxon>Clostridium</taxon>
    </lineage>
</organism>
<dbReference type="EMBL" id="AE001437">
    <property type="protein sequence ID" value="AAK80033.1"/>
    <property type="molecule type" value="Genomic_DNA"/>
</dbReference>
<dbReference type="PIR" id="F97155">
    <property type="entry name" value="F97155"/>
</dbReference>
<dbReference type="RefSeq" id="NP_348693.1">
    <property type="nucleotide sequence ID" value="NC_003030.1"/>
</dbReference>
<dbReference type="RefSeq" id="WP_010965374.1">
    <property type="nucleotide sequence ID" value="NC_003030.1"/>
</dbReference>
<dbReference type="SMR" id="Q97HD8"/>
<dbReference type="STRING" id="272562.CA_C2074"/>
<dbReference type="KEGG" id="cac:CA_C2074"/>
<dbReference type="PATRIC" id="fig|272562.8.peg.2278"/>
<dbReference type="eggNOG" id="COG1438">
    <property type="taxonomic scope" value="Bacteria"/>
</dbReference>
<dbReference type="HOGENOM" id="CLU_097103_3_0_9"/>
<dbReference type="OrthoDB" id="9807089at2"/>
<dbReference type="UniPathway" id="UPA00068"/>
<dbReference type="Proteomes" id="UP000000814">
    <property type="component" value="Chromosome"/>
</dbReference>
<dbReference type="GO" id="GO:0005737">
    <property type="term" value="C:cytoplasm"/>
    <property type="evidence" value="ECO:0007669"/>
    <property type="project" value="UniProtKB-SubCell"/>
</dbReference>
<dbReference type="GO" id="GO:0034618">
    <property type="term" value="F:arginine binding"/>
    <property type="evidence" value="ECO:0007669"/>
    <property type="project" value="InterPro"/>
</dbReference>
<dbReference type="GO" id="GO:0003677">
    <property type="term" value="F:DNA binding"/>
    <property type="evidence" value="ECO:0007669"/>
    <property type="project" value="UniProtKB-KW"/>
</dbReference>
<dbReference type="GO" id="GO:0003700">
    <property type="term" value="F:DNA-binding transcription factor activity"/>
    <property type="evidence" value="ECO:0007669"/>
    <property type="project" value="UniProtKB-UniRule"/>
</dbReference>
<dbReference type="GO" id="GO:0006526">
    <property type="term" value="P:L-arginine biosynthetic process"/>
    <property type="evidence" value="ECO:0007669"/>
    <property type="project" value="UniProtKB-UniPathway"/>
</dbReference>
<dbReference type="GO" id="GO:0051259">
    <property type="term" value="P:protein complex oligomerization"/>
    <property type="evidence" value="ECO:0007669"/>
    <property type="project" value="InterPro"/>
</dbReference>
<dbReference type="GO" id="GO:1900079">
    <property type="term" value="P:regulation of arginine biosynthetic process"/>
    <property type="evidence" value="ECO:0007669"/>
    <property type="project" value="UniProtKB-UniRule"/>
</dbReference>
<dbReference type="Gene3D" id="3.30.1360.40">
    <property type="match status" value="1"/>
</dbReference>
<dbReference type="Gene3D" id="1.10.10.10">
    <property type="entry name" value="Winged helix-like DNA-binding domain superfamily/Winged helix DNA-binding domain"/>
    <property type="match status" value="1"/>
</dbReference>
<dbReference type="HAMAP" id="MF_00173">
    <property type="entry name" value="Arg_repressor"/>
    <property type="match status" value="1"/>
</dbReference>
<dbReference type="InterPro" id="IPR001669">
    <property type="entry name" value="Arg_repress"/>
</dbReference>
<dbReference type="InterPro" id="IPR020899">
    <property type="entry name" value="Arg_repress_C"/>
</dbReference>
<dbReference type="InterPro" id="IPR036251">
    <property type="entry name" value="Arg_repress_C_sf"/>
</dbReference>
<dbReference type="InterPro" id="IPR020900">
    <property type="entry name" value="Arg_repress_DNA-bd"/>
</dbReference>
<dbReference type="InterPro" id="IPR036388">
    <property type="entry name" value="WH-like_DNA-bd_sf"/>
</dbReference>
<dbReference type="InterPro" id="IPR036390">
    <property type="entry name" value="WH_DNA-bd_sf"/>
</dbReference>
<dbReference type="NCBIfam" id="TIGR01529">
    <property type="entry name" value="argR_whole"/>
    <property type="match status" value="1"/>
</dbReference>
<dbReference type="NCBIfam" id="NF001680">
    <property type="entry name" value="PRK00441.1"/>
    <property type="match status" value="1"/>
</dbReference>
<dbReference type="PANTHER" id="PTHR34471">
    <property type="entry name" value="ARGININE REPRESSOR"/>
    <property type="match status" value="1"/>
</dbReference>
<dbReference type="PANTHER" id="PTHR34471:SF1">
    <property type="entry name" value="ARGININE REPRESSOR"/>
    <property type="match status" value="1"/>
</dbReference>
<dbReference type="Pfam" id="PF01316">
    <property type="entry name" value="Arg_repressor"/>
    <property type="match status" value="1"/>
</dbReference>
<dbReference type="Pfam" id="PF02863">
    <property type="entry name" value="Arg_repressor_C"/>
    <property type="match status" value="1"/>
</dbReference>
<dbReference type="PRINTS" id="PR01467">
    <property type="entry name" value="ARGREPRESSOR"/>
</dbReference>
<dbReference type="SUPFAM" id="SSF55252">
    <property type="entry name" value="C-terminal domain of arginine repressor"/>
    <property type="match status" value="1"/>
</dbReference>
<dbReference type="SUPFAM" id="SSF46785">
    <property type="entry name" value="Winged helix' DNA-binding domain"/>
    <property type="match status" value="1"/>
</dbReference>
<reference key="1">
    <citation type="journal article" date="2001" name="J. Bacteriol.">
        <title>Genome sequence and comparative analysis of the solvent-producing bacterium Clostridium acetobutylicum.</title>
        <authorList>
            <person name="Noelling J."/>
            <person name="Breton G."/>
            <person name="Omelchenko M.V."/>
            <person name="Makarova K.S."/>
            <person name="Zeng Q."/>
            <person name="Gibson R."/>
            <person name="Lee H.M."/>
            <person name="Dubois J."/>
            <person name="Qiu D."/>
            <person name="Hitti J."/>
            <person name="Wolf Y.I."/>
            <person name="Tatusov R.L."/>
            <person name="Sabathe F."/>
            <person name="Doucette-Stamm L.A."/>
            <person name="Soucaille P."/>
            <person name="Daly M.J."/>
            <person name="Bennett G.N."/>
            <person name="Koonin E.V."/>
            <person name="Smith D.R."/>
        </authorList>
    </citation>
    <scope>NUCLEOTIDE SEQUENCE [LARGE SCALE GENOMIC DNA]</scope>
    <source>
        <strain>ATCC 824 / DSM 792 / JCM 1419 / IAM 19013 / LMG 5710 / NBRC 13948 / NRRL B-527 / VKM B-1787 / 2291 / W</strain>
    </source>
</reference>
<comment type="function">
    <text evidence="1">Regulates arginine biosynthesis genes.</text>
</comment>
<comment type="pathway">
    <text>Amino-acid biosynthesis; L-arginine biosynthesis [regulation].</text>
</comment>
<comment type="subcellular location">
    <subcellularLocation>
        <location evidence="1">Cytoplasm</location>
    </subcellularLocation>
</comment>
<comment type="similarity">
    <text evidence="1">Belongs to the ArgR family.</text>
</comment>
<proteinExistence type="inferred from homology"/>
<feature type="chain" id="PRO_0000205078" description="Arginine repressor">
    <location>
        <begin position="1"/>
        <end position="150"/>
    </location>
</feature>